<organism>
    <name type="scientific">Tolumonas auensis (strain DSM 9187 / NBRC 110442 / TA 4)</name>
    <dbReference type="NCBI Taxonomy" id="595494"/>
    <lineage>
        <taxon>Bacteria</taxon>
        <taxon>Pseudomonadati</taxon>
        <taxon>Pseudomonadota</taxon>
        <taxon>Gammaproteobacteria</taxon>
        <taxon>Aeromonadales</taxon>
        <taxon>Aeromonadaceae</taxon>
        <taxon>Tolumonas</taxon>
    </lineage>
</organism>
<name>RS13_TOLAT</name>
<evidence type="ECO:0000255" key="1">
    <source>
        <dbReference type="HAMAP-Rule" id="MF_01315"/>
    </source>
</evidence>
<evidence type="ECO:0000256" key="2">
    <source>
        <dbReference type="SAM" id="MobiDB-lite"/>
    </source>
</evidence>
<evidence type="ECO:0000305" key="3"/>
<sequence>MARIAGINIPDHKHAVIALTAIYGVGDTRAKSICAAAGIAEDVKVKDLDEAQIEALRTEVGKFTVEGDLRREVSMNIKRLMDLGCYRGLRHRRGLPVRGQRTKTNARTRKGPRKPIKK</sequence>
<reference key="1">
    <citation type="submission" date="2009-05" db="EMBL/GenBank/DDBJ databases">
        <title>Complete sequence of Tolumonas auensis DSM 9187.</title>
        <authorList>
            <consortium name="US DOE Joint Genome Institute"/>
            <person name="Lucas S."/>
            <person name="Copeland A."/>
            <person name="Lapidus A."/>
            <person name="Glavina del Rio T."/>
            <person name="Tice H."/>
            <person name="Bruce D."/>
            <person name="Goodwin L."/>
            <person name="Pitluck S."/>
            <person name="Chertkov O."/>
            <person name="Brettin T."/>
            <person name="Detter J.C."/>
            <person name="Han C."/>
            <person name="Larimer F."/>
            <person name="Land M."/>
            <person name="Hauser L."/>
            <person name="Kyrpides N."/>
            <person name="Mikhailova N."/>
            <person name="Spring S."/>
            <person name="Beller H."/>
        </authorList>
    </citation>
    <scope>NUCLEOTIDE SEQUENCE [LARGE SCALE GENOMIC DNA]</scope>
    <source>
        <strain>DSM 9187 / NBRC 110442 / TA 4</strain>
    </source>
</reference>
<dbReference type="EMBL" id="CP001616">
    <property type="protein sequence ID" value="ACQ91751.1"/>
    <property type="molecule type" value="Genomic_DNA"/>
</dbReference>
<dbReference type="RefSeq" id="WP_012728350.1">
    <property type="nucleotide sequence ID" value="NC_012691.1"/>
</dbReference>
<dbReference type="SMR" id="C4L7V2"/>
<dbReference type="STRING" id="595494.Tola_0121"/>
<dbReference type="KEGG" id="tau:Tola_0121"/>
<dbReference type="eggNOG" id="COG0099">
    <property type="taxonomic scope" value="Bacteria"/>
</dbReference>
<dbReference type="HOGENOM" id="CLU_103849_1_2_6"/>
<dbReference type="OrthoDB" id="9803610at2"/>
<dbReference type="Proteomes" id="UP000009073">
    <property type="component" value="Chromosome"/>
</dbReference>
<dbReference type="GO" id="GO:0005829">
    <property type="term" value="C:cytosol"/>
    <property type="evidence" value="ECO:0007669"/>
    <property type="project" value="TreeGrafter"/>
</dbReference>
<dbReference type="GO" id="GO:0015935">
    <property type="term" value="C:small ribosomal subunit"/>
    <property type="evidence" value="ECO:0007669"/>
    <property type="project" value="TreeGrafter"/>
</dbReference>
<dbReference type="GO" id="GO:0019843">
    <property type="term" value="F:rRNA binding"/>
    <property type="evidence" value="ECO:0007669"/>
    <property type="project" value="UniProtKB-UniRule"/>
</dbReference>
<dbReference type="GO" id="GO:0003735">
    <property type="term" value="F:structural constituent of ribosome"/>
    <property type="evidence" value="ECO:0007669"/>
    <property type="project" value="InterPro"/>
</dbReference>
<dbReference type="GO" id="GO:0000049">
    <property type="term" value="F:tRNA binding"/>
    <property type="evidence" value="ECO:0007669"/>
    <property type="project" value="UniProtKB-UniRule"/>
</dbReference>
<dbReference type="GO" id="GO:0006412">
    <property type="term" value="P:translation"/>
    <property type="evidence" value="ECO:0007669"/>
    <property type="project" value="UniProtKB-UniRule"/>
</dbReference>
<dbReference type="FunFam" id="1.10.8.50:FF:000001">
    <property type="entry name" value="30S ribosomal protein S13"/>
    <property type="match status" value="1"/>
</dbReference>
<dbReference type="FunFam" id="4.10.910.10:FF:000001">
    <property type="entry name" value="30S ribosomal protein S13"/>
    <property type="match status" value="1"/>
</dbReference>
<dbReference type="Gene3D" id="1.10.8.50">
    <property type="match status" value="1"/>
</dbReference>
<dbReference type="Gene3D" id="4.10.910.10">
    <property type="entry name" value="30s ribosomal protein s13, domain 2"/>
    <property type="match status" value="1"/>
</dbReference>
<dbReference type="HAMAP" id="MF_01315">
    <property type="entry name" value="Ribosomal_uS13"/>
    <property type="match status" value="1"/>
</dbReference>
<dbReference type="InterPro" id="IPR027437">
    <property type="entry name" value="Rbsml_uS13_C"/>
</dbReference>
<dbReference type="InterPro" id="IPR001892">
    <property type="entry name" value="Ribosomal_uS13"/>
</dbReference>
<dbReference type="InterPro" id="IPR010979">
    <property type="entry name" value="Ribosomal_uS13-like_H2TH"/>
</dbReference>
<dbReference type="InterPro" id="IPR019980">
    <property type="entry name" value="Ribosomal_uS13_bac-type"/>
</dbReference>
<dbReference type="InterPro" id="IPR018269">
    <property type="entry name" value="Ribosomal_uS13_CS"/>
</dbReference>
<dbReference type="NCBIfam" id="TIGR03631">
    <property type="entry name" value="uS13_bact"/>
    <property type="match status" value="1"/>
</dbReference>
<dbReference type="PANTHER" id="PTHR10871">
    <property type="entry name" value="30S RIBOSOMAL PROTEIN S13/40S RIBOSOMAL PROTEIN S18"/>
    <property type="match status" value="1"/>
</dbReference>
<dbReference type="PANTHER" id="PTHR10871:SF1">
    <property type="entry name" value="SMALL RIBOSOMAL SUBUNIT PROTEIN US13M"/>
    <property type="match status" value="1"/>
</dbReference>
<dbReference type="Pfam" id="PF00416">
    <property type="entry name" value="Ribosomal_S13"/>
    <property type="match status" value="1"/>
</dbReference>
<dbReference type="PIRSF" id="PIRSF002134">
    <property type="entry name" value="Ribosomal_S13"/>
    <property type="match status" value="1"/>
</dbReference>
<dbReference type="SUPFAM" id="SSF46946">
    <property type="entry name" value="S13-like H2TH domain"/>
    <property type="match status" value="1"/>
</dbReference>
<dbReference type="PROSITE" id="PS00646">
    <property type="entry name" value="RIBOSOMAL_S13_1"/>
    <property type="match status" value="1"/>
</dbReference>
<dbReference type="PROSITE" id="PS50159">
    <property type="entry name" value="RIBOSOMAL_S13_2"/>
    <property type="match status" value="1"/>
</dbReference>
<proteinExistence type="inferred from homology"/>
<gene>
    <name evidence="1" type="primary">rpsM</name>
    <name type="ordered locus">Tola_0121</name>
</gene>
<keyword id="KW-1185">Reference proteome</keyword>
<keyword id="KW-0687">Ribonucleoprotein</keyword>
<keyword id="KW-0689">Ribosomal protein</keyword>
<keyword id="KW-0694">RNA-binding</keyword>
<keyword id="KW-0699">rRNA-binding</keyword>
<keyword id="KW-0820">tRNA-binding</keyword>
<accession>C4L7V2</accession>
<protein>
    <recommendedName>
        <fullName evidence="1">Small ribosomal subunit protein uS13</fullName>
    </recommendedName>
    <alternativeName>
        <fullName evidence="3">30S ribosomal protein S13</fullName>
    </alternativeName>
</protein>
<feature type="chain" id="PRO_1000214409" description="Small ribosomal subunit protein uS13">
    <location>
        <begin position="1"/>
        <end position="118"/>
    </location>
</feature>
<feature type="region of interest" description="Disordered" evidence="2">
    <location>
        <begin position="94"/>
        <end position="118"/>
    </location>
</feature>
<comment type="function">
    <text evidence="1">Located at the top of the head of the 30S subunit, it contacts several helices of the 16S rRNA. In the 70S ribosome it contacts the 23S rRNA (bridge B1a) and protein L5 of the 50S subunit (bridge B1b), connecting the 2 subunits; these bridges are implicated in subunit movement. Contacts the tRNAs in the A and P-sites.</text>
</comment>
<comment type="subunit">
    <text evidence="1">Part of the 30S ribosomal subunit. Forms a loose heterodimer with protein S19. Forms two bridges to the 50S subunit in the 70S ribosome.</text>
</comment>
<comment type="similarity">
    <text evidence="1">Belongs to the universal ribosomal protein uS13 family.</text>
</comment>